<evidence type="ECO:0000250" key="1"/>
<evidence type="ECO:0000269" key="2">
    <source>
    </source>
</evidence>
<evidence type="ECO:0000303" key="3">
    <source>
    </source>
</evidence>
<evidence type="ECO:0000305" key="4"/>
<protein>
    <recommendedName>
        <fullName>Phospholipase A2 1</fullName>
        <shortName>PLA2</shortName>
        <ecNumber>3.1.1.4</ecNumber>
    </recommendedName>
    <alternativeName>
        <fullName evidence="3">Phospholipase OcyPLA2_1</fullName>
    </alternativeName>
</protein>
<comment type="function">
    <text evidence="1">PLA2 catalyzes the calcium-dependent hydrolysis of the 2-acyl groups in 3-sn-phosphoglycerides.</text>
</comment>
<comment type="catalytic activity">
    <reaction evidence="2">
        <text>a 1,2-diacyl-sn-glycero-3-phosphocholine + H2O = a 1-acyl-sn-glycero-3-phosphocholine + a fatty acid + H(+)</text>
        <dbReference type="Rhea" id="RHEA:15801"/>
        <dbReference type="ChEBI" id="CHEBI:15377"/>
        <dbReference type="ChEBI" id="CHEBI:15378"/>
        <dbReference type="ChEBI" id="CHEBI:28868"/>
        <dbReference type="ChEBI" id="CHEBI:57643"/>
        <dbReference type="ChEBI" id="CHEBI:58168"/>
        <dbReference type="EC" id="3.1.1.4"/>
    </reaction>
</comment>
<comment type="subcellular location">
    <subcellularLocation>
        <location evidence="4">Secreted</location>
    </subcellularLocation>
</comment>
<comment type="tissue specificity">
    <text evidence="4">Expressed by the venom gland.</text>
</comment>
<comment type="mass spectrometry"/>
<name>PA21_OPICY</name>
<sequence>DFTGVKFDNTIGCGKG</sequence>
<dbReference type="EC" id="3.1.1.4"/>
<dbReference type="GO" id="GO:0005576">
    <property type="term" value="C:extracellular region"/>
    <property type="evidence" value="ECO:0007669"/>
    <property type="project" value="UniProtKB-SubCell"/>
</dbReference>
<dbReference type="GO" id="GO:0004623">
    <property type="term" value="F:phospholipase A2 activity"/>
    <property type="evidence" value="ECO:0007669"/>
    <property type="project" value="UniProtKB-EC"/>
</dbReference>
<dbReference type="GO" id="GO:0016042">
    <property type="term" value="P:lipid catabolic process"/>
    <property type="evidence" value="ECO:0007669"/>
    <property type="project" value="UniProtKB-KW"/>
</dbReference>
<organism>
    <name type="scientific">Opisthacanthus cayaporum</name>
    <name type="common">South American scorpion</name>
    <dbReference type="NCBI Taxonomy" id="573324"/>
    <lineage>
        <taxon>Eukaryota</taxon>
        <taxon>Metazoa</taxon>
        <taxon>Ecdysozoa</taxon>
        <taxon>Arthropoda</taxon>
        <taxon>Chelicerata</taxon>
        <taxon>Arachnida</taxon>
        <taxon>Scorpiones</taxon>
        <taxon>Iurida</taxon>
        <taxon>Scorpionoidea</taxon>
        <taxon>Hemiscorpiidae</taxon>
        <taxon>Opisthacanthus</taxon>
    </lineage>
</organism>
<keyword id="KW-0903">Direct protein sequencing</keyword>
<keyword id="KW-0378">Hydrolase</keyword>
<keyword id="KW-0442">Lipid degradation</keyword>
<keyword id="KW-0443">Lipid metabolism</keyword>
<keyword id="KW-0964">Secreted</keyword>
<accession>P86119</accession>
<feature type="chain" id="PRO_0000358859" description="Phospholipase A2 1">
    <location>
        <begin position="1"/>
        <end position="16" status="greater than"/>
    </location>
</feature>
<feature type="non-terminal residue" evidence="3">
    <location>
        <position position="16"/>
    </location>
</feature>
<reference evidence="4" key="1">
    <citation type="journal article" date="2008" name="Toxicon">
        <title>Mass spectrometry analysis, amino acid sequence and biological activity of venom components from the Brazilian scorpion Opisthacanthus cayaporum.</title>
        <authorList>
            <person name="Schwartz E.F."/>
            <person name="Camargos T.S."/>
            <person name="Zamudio F.Z."/>
            <person name="Silva L.P."/>
            <person name="Bloch C. Jr."/>
            <person name="Caixeta F."/>
            <person name="Schwartz C.A."/>
            <person name="Possani L.D."/>
        </authorList>
    </citation>
    <scope>PROTEIN SEQUENCE</scope>
    <scope>CATALYTIC ACTIVITY</scope>
    <scope>MASS SPECTROMETRY</scope>
    <source>
        <tissue evidence="2">Venom</tissue>
    </source>
</reference>
<proteinExistence type="evidence at protein level"/>